<organism>
    <name type="scientific">Caenorhabditis elegans</name>
    <dbReference type="NCBI Taxonomy" id="6239"/>
    <lineage>
        <taxon>Eukaryota</taxon>
        <taxon>Metazoa</taxon>
        <taxon>Ecdysozoa</taxon>
        <taxon>Nematoda</taxon>
        <taxon>Chromadorea</taxon>
        <taxon>Rhabditida</taxon>
        <taxon>Rhabditina</taxon>
        <taxon>Rhabditomorpha</taxon>
        <taxon>Rhabditoidea</taxon>
        <taxon>Rhabditidae</taxon>
        <taxon>Peloderinae</taxon>
        <taxon>Caenorhabditis</taxon>
    </lineage>
</organism>
<accession>Q6DNF3</accession>
<accession>O44468</accession>
<accession>Q65CM4</accession>
<keyword id="KW-0141">cGMP biosynthesis</keyword>
<keyword id="KW-0175">Coiled coil</keyword>
<keyword id="KW-0963">Cytoplasm</keyword>
<keyword id="KW-0342">GTP-binding</keyword>
<keyword id="KW-0349">Heme</keyword>
<keyword id="KW-0408">Iron</keyword>
<keyword id="KW-0456">Lyase</keyword>
<keyword id="KW-0460">Magnesium</keyword>
<keyword id="KW-0479">Metal-binding</keyword>
<keyword id="KW-0547">Nucleotide-binding</keyword>
<keyword id="KW-1185">Reference proteome</keyword>
<proteinExistence type="evidence at transcript level"/>
<feature type="chain" id="PRO_0000074128" description="Soluble guanylate cyclase gcy-37">
    <location>
        <begin position="1"/>
        <end position="708"/>
    </location>
</feature>
<feature type="domain" description="Guanylate cyclase" evidence="3">
    <location>
        <begin position="434"/>
        <end position="562"/>
    </location>
</feature>
<feature type="coiled-coil region" evidence="2">
    <location>
        <begin position="368"/>
        <end position="409"/>
    </location>
</feature>
<feature type="binding site" description="proximal binding residue" evidence="1">
    <location>
        <position position="105"/>
    </location>
    <ligand>
        <name>heme</name>
        <dbReference type="ChEBI" id="CHEBI:30413"/>
    </ligand>
    <ligandPart>
        <name>Fe</name>
        <dbReference type="ChEBI" id="CHEBI:18248"/>
    </ligandPart>
</feature>
<feature type="binding site" evidence="1">
    <location>
        <position position="439"/>
    </location>
    <ligand>
        <name>Mg(2+)</name>
        <dbReference type="ChEBI" id="CHEBI:18420"/>
    </ligand>
</feature>
<feature type="binding site" evidence="1">
    <location>
        <position position="483"/>
    </location>
    <ligand>
        <name>Mg(2+)</name>
        <dbReference type="ChEBI" id="CHEBI:18420"/>
    </ligand>
</feature>
<reference key="1">
    <citation type="journal article" date="2004" name="Nature">
        <title>Oxygen sensation and social feeding mediated by a C. elegans guanylate cyclase homologue.</title>
        <authorList>
            <person name="Gray J.M."/>
            <person name="Karow D.S."/>
            <person name="Lu H."/>
            <person name="Chang A.J."/>
            <person name="Chang J.S."/>
            <person name="Ellis R.E."/>
            <person name="Marletta M.A."/>
            <person name="Bargmann C.I."/>
        </authorList>
    </citation>
    <scope>NUCLEOTIDE SEQUENCE [MRNA]</scope>
    <scope>TISSUE SPECIFICITY</scope>
</reference>
<reference key="2">
    <citation type="journal article" date="1998" name="Science">
        <title>Genome sequence of the nematode C. elegans: a platform for investigating biology.</title>
        <authorList>
            <consortium name="The C. elegans sequencing consortium"/>
        </authorList>
    </citation>
    <scope>NUCLEOTIDE SEQUENCE [LARGE SCALE GENOMIC DNA]</scope>
    <source>
        <strain>Bristol N2</strain>
    </source>
</reference>
<protein>
    <recommendedName>
        <fullName>Soluble guanylate cyclase gcy-37</fullName>
        <ecNumber>4.6.1.2</ecNumber>
    </recommendedName>
</protein>
<gene>
    <name type="primary">gcy-37</name>
    <name type="ORF">C54E4.3</name>
</gene>
<name>GCY37_CAEEL</name>
<sequence length="708" mass="81104">MIGWTHVCVSALILRKYGPEVLEEILRKAGYQEDIKFDIQCYYDDTETMRIFRVAATVLGLSVDDMWEMYGEFLITHACETGWQKMLFCMANNLQEFLDNLNSMHYFIDQIAFKSEMKGPTFQCEPFGESGLKLHYFSFRQGLFPIVKGLVRKTARTLFEMDVKVCMLERNQERRKSGMVEHVIFSVEPDDNHRKGKRLFHKFRNTKTTENAPSFTLSSTILVGLRDFKNIFPYHVCFNKQMIIEHIGIYLLREYGLENKKTLKVSDLMQLVQPSDIQLTYKNVLSYLNTLFIFQLKHHSKRNEVQEGSSEAFQQPLVLKGEMMPINDGNSIIFICSPHVTTVRDILNLKLYISDMPMHDATRDLVMLNQSRICQMELNKKLEETMKKMKKMTEELEVKKSQTDRLLFEFVPPVIAEALRAAKTVPAQEFSDCSVIFTDIPDFFTISVNCSPTEIITVVTDLFHRFDRIIEKHKGYKVLSLMDSYLIVGGVPNANQYHCEDSLNLALGLLFEAKQVVVPKLERSVRLRIGVHCGPVVAGIVSQQKPRFCVLGNTVNVTKSICSHSSPGKVLVSNAVRTMVTKHLKSIFVFNANGYLELQSGKVLTHFLEKNEKCSVWDIVDRDKATNDSIDGYRELHSDNGTEEWQEATVAAYRVISVVDALENKQSRTRKALTRLRSVKRKFRTIQSNDSGVSVSEPNVESAVCSIM</sequence>
<dbReference type="EC" id="4.6.1.2"/>
<dbReference type="EMBL" id="AY652946">
    <property type="protein sequence ID" value="AAT73713.1"/>
    <property type="molecule type" value="mRNA"/>
</dbReference>
<dbReference type="EMBL" id="FO080949">
    <property type="protein sequence ID" value="CCD68037.1"/>
    <property type="molecule type" value="Genomic_DNA"/>
</dbReference>
<dbReference type="PIR" id="F88642">
    <property type="entry name" value="F88642"/>
</dbReference>
<dbReference type="RefSeq" id="NP_500171.2">
    <property type="nucleotide sequence ID" value="NM_067770.5"/>
</dbReference>
<dbReference type="SMR" id="Q6DNF3"/>
<dbReference type="FunCoup" id="Q6DNF3">
    <property type="interactions" value="18"/>
</dbReference>
<dbReference type="STRING" id="6239.C54E4.3.1"/>
<dbReference type="PaxDb" id="6239-C54E4.3"/>
<dbReference type="EnsemblMetazoa" id="C54E4.3.1">
    <property type="protein sequence ID" value="C54E4.3.1"/>
    <property type="gene ID" value="WBGene00001557"/>
</dbReference>
<dbReference type="GeneID" id="191658"/>
<dbReference type="KEGG" id="cel:CELE_C54E4.3"/>
<dbReference type="UCSC" id="C54E4.3">
    <property type="organism name" value="c. elegans"/>
</dbReference>
<dbReference type="AGR" id="WB:WBGene00001557"/>
<dbReference type="CTD" id="191658"/>
<dbReference type="WormBase" id="C54E4.3">
    <property type="protein sequence ID" value="CE37494"/>
    <property type="gene ID" value="WBGene00001557"/>
    <property type="gene designation" value="gcy-37"/>
</dbReference>
<dbReference type="eggNOG" id="KOG1573">
    <property type="taxonomic scope" value="Eukaryota"/>
</dbReference>
<dbReference type="eggNOG" id="KOG4171">
    <property type="taxonomic scope" value="Eukaryota"/>
</dbReference>
<dbReference type="HOGENOM" id="CLU_011614_4_0_1"/>
<dbReference type="InParanoid" id="Q6DNF3"/>
<dbReference type="OMA" id="MPMHDAT"/>
<dbReference type="OrthoDB" id="6127067at2759"/>
<dbReference type="PhylomeDB" id="Q6DNF3"/>
<dbReference type="PRO" id="PR:Q6DNF3"/>
<dbReference type="Proteomes" id="UP000001940">
    <property type="component" value="Chromosome IV"/>
</dbReference>
<dbReference type="Bgee" id="WBGene00001557">
    <property type="expression patterns" value="Expressed in pharyngeal muscle cell (C elegans) and 3 other cell types or tissues"/>
</dbReference>
<dbReference type="GO" id="GO:0008074">
    <property type="term" value="C:guanylate cyclase complex, soluble"/>
    <property type="evidence" value="ECO:0000318"/>
    <property type="project" value="GO_Central"/>
</dbReference>
<dbReference type="GO" id="GO:0005525">
    <property type="term" value="F:GTP binding"/>
    <property type="evidence" value="ECO:0007669"/>
    <property type="project" value="UniProtKB-KW"/>
</dbReference>
<dbReference type="GO" id="GO:0004383">
    <property type="term" value="F:guanylate cyclase activity"/>
    <property type="evidence" value="ECO:0000318"/>
    <property type="project" value="GO_Central"/>
</dbReference>
<dbReference type="GO" id="GO:0020037">
    <property type="term" value="F:heme binding"/>
    <property type="evidence" value="ECO:0007669"/>
    <property type="project" value="InterPro"/>
</dbReference>
<dbReference type="GO" id="GO:0046872">
    <property type="term" value="F:metal ion binding"/>
    <property type="evidence" value="ECO:0007669"/>
    <property type="project" value="UniProtKB-KW"/>
</dbReference>
<dbReference type="GO" id="GO:0019934">
    <property type="term" value="P:cGMP-mediated signaling"/>
    <property type="evidence" value="ECO:0000318"/>
    <property type="project" value="GO_Central"/>
</dbReference>
<dbReference type="GO" id="GO:0070482">
    <property type="term" value="P:response to oxygen levels"/>
    <property type="evidence" value="ECO:0000318"/>
    <property type="project" value="GO_Central"/>
</dbReference>
<dbReference type="CDD" id="cd07302">
    <property type="entry name" value="CHD"/>
    <property type="match status" value="1"/>
</dbReference>
<dbReference type="FunFam" id="3.30.450.260:FF:000008">
    <property type="entry name" value="Soluble guanylate cyclase gcy-37"/>
    <property type="match status" value="1"/>
</dbReference>
<dbReference type="FunFam" id="3.30.70.1230:FF:000073">
    <property type="entry name" value="Soluble guanylate cyclase gcy-37"/>
    <property type="match status" value="1"/>
</dbReference>
<dbReference type="Gene3D" id="6.10.250.780">
    <property type="match status" value="1"/>
</dbReference>
<dbReference type="Gene3D" id="3.90.1520.10">
    <property type="entry name" value="H-NOX domain"/>
    <property type="match status" value="1"/>
</dbReference>
<dbReference type="Gene3D" id="3.30.450.260">
    <property type="entry name" value="Haem NO binding associated domain"/>
    <property type="match status" value="1"/>
</dbReference>
<dbReference type="Gene3D" id="3.30.70.1230">
    <property type="entry name" value="Nucleotide cyclase"/>
    <property type="match status" value="1"/>
</dbReference>
<dbReference type="InterPro" id="IPR001054">
    <property type="entry name" value="A/G_cyclase"/>
</dbReference>
<dbReference type="InterPro" id="IPR018297">
    <property type="entry name" value="A/G_cyclase_CS"/>
</dbReference>
<dbReference type="InterPro" id="IPR038158">
    <property type="entry name" value="H-NOX_domain_sf"/>
</dbReference>
<dbReference type="InterPro" id="IPR011644">
    <property type="entry name" value="Heme_NO-bd"/>
</dbReference>
<dbReference type="InterPro" id="IPR011645">
    <property type="entry name" value="HNOB_dom_associated"/>
</dbReference>
<dbReference type="InterPro" id="IPR042463">
    <property type="entry name" value="HNOB_dom_associated_sf"/>
</dbReference>
<dbReference type="InterPro" id="IPR024096">
    <property type="entry name" value="NO_sig/Golgi_transp_ligand-bd"/>
</dbReference>
<dbReference type="InterPro" id="IPR029787">
    <property type="entry name" value="Nucleotide_cyclase"/>
</dbReference>
<dbReference type="PANTHER" id="PTHR45655">
    <property type="entry name" value="GUANYLATE CYCLASE SOLUBLE SUBUNIT BETA-2"/>
    <property type="match status" value="1"/>
</dbReference>
<dbReference type="PANTHER" id="PTHR45655:SF1">
    <property type="entry name" value="SOLUBLE GUANYLATE CYCLASE GCY-37"/>
    <property type="match status" value="1"/>
</dbReference>
<dbReference type="Pfam" id="PF00211">
    <property type="entry name" value="Guanylate_cyc"/>
    <property type="match status" value="1"/>
</dbReference>
<dbReference type="Pfam" id="PF07700">
    <property type="entry name" value="HNOB"/>
    <property type="match status" value="1"/>
</dbReference>
<dbReference type="Pfam" id="PF07701">
    <property type="entry name" value="HNOBA"/>
    <property type="match status" value="1"/>
</dbReference>
<dbReference type="SMART" id="SM00044">
    <property type="entry name" value="CYCc"/>
    <property type="match status" value="1"/>
</dbReference>
<dbReference type="SUPFAM" id="SSF111126">
    <property type="entry name" value="Ligand-binding domain in the NO signalling and Golgi transport"/>
    <property type="match status" value="1"/>
</dbReference>
<dbReference type="SUPFAM" id="SSF55073">
    <property type="entry name" value="Nucleotide cyclase"/>
    <property type="match status" value="1"/>
</dbReference>
<dbReference type="PROSITE" id="PS00452">
    <property type="entry name" value="GUANYLATE_CYCLASE_1"/>
    <property type="match status" value="1"/>
</dbReference>
<dbReference type="PROSITE" id="PS50125">
    <property type="entry name" value="GUANYLATE_CYCLASE_2"/>
    <property type="match status" value="1"/>
</dbReference>
<comment type="function">
    <text evidence="1">Synthesizes cyclic GMP (cGMP) from GTP (By similarity). May play a role in sensory neurons.</text>
</comment>
<comment type="catalytic activity">
    <reaction>
        <text>GTP = 3',5'-cyclic GMP + diphosphate</text>
        <dbReference type="Rhea" id="RHEA:13665"/>
        <dbReference type="ChEBI" id="CHEBI:33019"/>
        <dbReference type="ChEBI" id="CHEBI:37565"/>
        <dbReference type="ChEBI" id="CHEBI:57746"/>
        <dbReference type="EC" id="4.6.1.2"/>
    </reaction>
</comment>
<comment type="cofactor">
    <cofactor evidence="1">
        <name>heme</name>
        <dbReference type="ChEBI" id="CHEBI:30413"/>
    </cofactor>
    <text evidence="1">Binds 1 or 2 heme groups per heterodimer.</text>
</comment>
<comment type="activity regulation">
    <text evidence="1">May be regulated by molecular oxygen. Probably not activated by nitric oxide (NO) (By similarity).</text>
</comment>
<comment type="subunit">
    <text evidence="1">Heterodimer; with other soluble guanylate cyclases.</text>
</comment>
<comment type="subcellular location">
    <subcellularLocation>
        <location evidence="1">Cytoplasm</location>
    </subcellularLocation>
</comment>
<comment type="tissue specificity">
    <text evidence="4">Expressed in a small number of neurons, corresponding to URX, AQR and PQR neurons.</text>
</comment>
<comment type="miscellaneous">
    <text>There are two types of guanylate cyclases: soluble forms and membrane-associated receptor forms.</text>
</comment>
<comment type="similarity">
    <text evidence="3">Belongs to the adenylyl cyclase class-4/guanylyl cyclase family.</text>
</comment>
<evidence type="ECO:0000250" key="1"/>
<evidence type="ECO:0000255" key="2"/>
<evidence type="ECO:0000255" key="3">
    <source>
        <dbReference type="PROSITE-ProRule" id="PRU00099"/>
    </source>
</evidence>
<evidence type="ECO:0000269" key="4">
    <source>
    </source>
</evidence>